<dbReference type="EC" id="6.1.1.12" evidence="1"/>
<dbReference type="EMBL" id="BX248583">
    <property type="protein sequence ID" value="CAD83514.1"/>
    <property type="molecule type" value="Genomic_DNA"/>
</dbReference>
<dbReference type="SMR" id="Q7VQX8"/>
<dbReference type="STRING" id="203907.Bfl452"/>
<dbReference type="KEGG" id="bfl:Bfl452"/>
<dbReference type="eggNOG" id="COG0173">
    <property type="taxonomic scope" value="Bacteria"/>
</dbReference>
<dbReference type="HOGENOM" id="CLU_014330_3_2_6"/>
<dbReference type="OrthoDB" id="9802326at2"/>
<dbReference type="Proteomes" id="UP000002192">
    <property type="component" value="Chromosome"/>
</dbReference>
<dbReference type="GO" id="GO:0005737">
    <property type="term" value="C:cytoplasm"/>
    <property type="evidence" value="ECO:0007669"/>
    <property type="project" value="UniProtKB-SubCell"/>
</dbReference>
<dbReference type="GO" id="GO:0004815">
    <property type="term" value="F:aspartate-tRNA ligase activity"/>
    <property type="evidence" value="ECO:0007669"/>
    <property type="project" value="UniProtKB-UniRule"/>
</dbReference>
<dbReference type="GO" id="GO:0005524">
    <property type="term" value="F:ATP binding"/>
    <property type="evidence" value="ECO:0007669"/>
    <property type="project" value="UniProtKB-UniRule"/>
</dbReference>
<dbReference type="GO" id="GO:0003676">
    <property type="term" value="F:nucleic acid binding"/>
    <property type="evidence" value="ECO:0007669"/>
    <property type="project" value="InterPro"/>
</dbReference>
<dbReference type="GO" id="GO:0006422">
    <property type="term" value="P:aspartyl-tRNA aminoacylation"/>
    <property type="evidence" value="ECO:0007669"/>
    <property type="project" value="UniProtKB-UniRule"/>
</dbReference>
<dbReference type="CDD" id="cd00777">
    <property type="entry name" value="AspRS_core"/>
    <property type="match status" value="1"/>
</dbReference>
<dbReference type="CDD" id="cd04317">
    <property type="entry name" value="EcAspRS_like_N"/>
    <property type="match status" value="1"/>
</dbReference>
<dbReference type="Gene3D" id="3.30.930.10">
    <property type="entry name" value="Bira Bifunctional Protein, Domain 2"/>
    <property type="match status" value="1"/>
</dbReference>
<dbReference type="Gene3D" id="3.30.1360.30">
    <property type="entry name" value="GAD-like domain"/>
    <property type="match status" value="1"/>
</dbReference>
<dbReference type="Gene3D" id="2.40.50.140">
    <property type="entry name" value="Nucleic acid-binding proteins"/>
    <property type="match status" value="1"/>
</dbReference>
<dbReference type="HAMAP" id="MF_00044">
    <property type="entry name" value="Asp_tRNA_synth_type1"/>
    <property type="match status" value="1"/>
</dbReference>
<dbReference type="InterPro" id="IPR004364">
    <property type="entry name" value="Aa-tRNA-synt_II"/>
</dbReference>
<dbReference type="InterPro" id="IPR006195">
    <property type="entry name" value="aa-tRNA-synth_II"/>
</dbReference>
<dbReference type="InterPro" id="IPR045864">
    <property type="entry name" value="aa-tRNA-synth_II/BPL/LPL"/>
</dbReference>
<dbReference type="InterPro" id="IPR004524">
    <property type="entry name" value="Asp-tRNA-ligase_1"/>
</dbReference>
<dbReference type="InterPro" id="IPR047089">
    <property type="entry name" value="Asp-tRNA-ligase_1_N"/>
</dbReference>
<dbReference type="InterPro" id="IPR002312">
    <property type="entry name" value="Asp/Asn-tRNA-synth_IIb"/>
</dbReference>
<dbReference type="InterPro" id="IPR047090">
    <property type="entry name" value="AspRS_core"/>
</dbReference>
<dbReference type="InterPro" id="IPR004115">
    <property type="entry name" value="GAD-like_sf"/>
</dbReference>
<dbReference type="InterPro" id="IPR029351">
    <property type="entry name" value="GAD_dom"/>
</dbReference>
<dbReference type="InterPro" id="IPR012340">
    <property type="entry name" value="NA-bd_OB-fold"/>
</dbReference>
<dbReference type="InterPro" id="IPR004365">
    <property type="entry name" value="NA-bd_OB_tRNA"/>
</dbReference>
<dbReference type="NCBIfam" id="TIGR00459">
    <property type="entry name" value="aspS_bact"/>
    <property type="match status" value="1"/>
</dbReference>
<dbReference type="NCBIfam" id="NF001750">
    <property type="entry name" value="PRK00476.1"/>
    <property type="match status" value="1"/>
</dbReference>
<dbReference type="PANTHER" id="PTHR22594:SF5">
    <property type="entry name" value="ASPARTATE--TRNA LIGASE, MITOCHONDRIAL"/>
    <property type="match status" value="1"/>
</dbReference>
<dbReference type="PANTHER" id="PTHR22594">
    <property type="entry name" value="ASPARTYL/LYSYL-TRNA SYNTHETASE"/>
    <property type="match status" value="1"/>
</dbReference>
<dbReference type="Pfam" id="PF02938">
    <property type="entry name" value="GAD"/>
    <property type="match status" value="1"/>
</dbReference>
<dbReference type="Pfam" id="PF00152">
    <property type="entry name" value="tRNA-synt_2"/>
    <property type="match status" value="1"/>
</dbReference>
<dbReference type="Pfam" id="PF01336">
    <property type="entry name" value="tRNA_anti-codon"/>
    <property type="match status" value="1"/>
</dbReference>
<dbReference type="PRINTS" id="PR01042">
    <property type="entry name" value="TRNASYNTHASP"/>
</dbReference>
<dbReference type="SUPFAM" id="SSF55681">
    <property type="entry name" value="Class II aaRS and biotin synthetases"/>
    <property type="match status" value="1"/>
</dbReference>
<dbReference type="SUPFAM" id="SSF55261">
    <property type="entry name" value="GAD domain-like"/>
    <property type="match status" value="1"/>
</dbReference>
<dbReference type="SUPFAM" id="SSF50249">
    <property type="entry name" value="Nucleic acid-binding proteins"/>
    <property type="match status" value="1"/>
</dbReference>
<dbReference type="PROSITE" id="PS50862">
    <property type="entry name" value="AA_TRNA_LIGASE_II"/>
    <property type="match status" value="1"/>
</dbReference>
<protein>
    <recommendedName>
        <fullName evidence="1">Aspartate--tRNA ligase</fullName>
        <ecNumber evidence="1">6.1.1.12</ecNumber>
    </recommendedName>
    <alternativeName>
        <fullName evidence="1">Aspartyl-tRNA synthetase</fullName>
        <shortName evidence="1">AspRS</shortName>
    </alternativeName>
</protein>
<name>SYD_BLOFL</name>
<reference key="1">
    <citation type="journal article" date="2003" name="Proc. Natl. Acad. Sci. U.S.A.">
        <title>The genome sequence of Blochmannia floridanus: comparative analysis of reduced genomes.</title>
        <authorList>
            <person name="Gil R."/>
            <person name="Silva F.J."/>
            <person name="Zientz E."/>
            <person name="Delmotte F."/>
            <person name="Gonzalez-Candelas F."/>
            <person name="Latorre A."/>
            <person name="Rausell C."/>
            <person name="Kamerbeek J."/>
            <person name="Gadau J."/>
            <person name="Hoelldobler B."/>
            <person name="van Ham R.C.H.J."/>
            <person name="Gross R."/>
            <person name="Moya A."/>
        </authorList>
    </citation>
    <scope>NUCLEOTIDE SEQUENCE [LARGE SCALE GENOMIC DNA]</scope>
</reference>
<organism>
    <name type="scientific">Blochmanniella floridana</name>
    <dbReference type="NCBI Taxonomy" id="203907"/>
    <lineage>
        <taxon>Bacteria</taxon>
        <taxon>Pseudomonadati</taxon>
        <taxon>Pseudomonadota</taxon>
        <taxon>Gammaproteobacteria</taxon>
        <taxon>Enterobacterales</taxon>
        <taxon>Enterobacteriaceae</taxon>
        <taxon>ant endosymbionts</taxon>
        <taxon>Candidatus Blochmanniella</taxon>
    </lineage>
</organism>
<accession>Q7VQX8</accession>
<comment type="function">
    <text evidence="1">Catalyzes the attachment of L-aspartate to tRNA(Asp) in a two-step reaction: L-aspartate is first activated by ATP to form Asp-AMP and then transferred to the acceptor end of tRNA(Asp).</text>
</comment>
<comment type="catalytic activity">
    <reaction evidence="1">
        <text>tRNA(Asp) + L-aspartate + ATP = L-aspartyl-tRNA(Asp) + AMP + diphosphate</text>
        <dbReference type="Rhea" id="RHEA:19649"/>
        <dbReference type="Rhea" id="RHEA-COMP:9660"/>
        <dbReference type="Rhea" id="RHEA-COMP:9678"/>
        <dbReference type="ChEBI" id="CHEBI:29991"/>
        <dbReference type="ChEBI" id="CHEBI:30616"/>
        <dbReference type="ChEBI" id="CHEBI:33019"/>
        <dbReference type="ChEBI" id="CHEBI:78442"/>
        <dbReference type="ChEBI" id="CHEBI:78516"/>
        <dbReference type="ChEBI" id="CHEBI:456215"/>
        <dbReference type="EC" id="6.1.1.12"/>
    </reaction>
</comment>
<comment type="subunit">
    <text evidence="1">Homodimer.</text>
</comment>
<comment type="subcellular location">
    <subcellularLocation>
        <location evidence="1">Cytoplasm</location>
    </subcellularLocation>
</comment>
<comment type="similarity">
    <text evidence="1">Belongs to the class-II aminoacyl-tRNA synthetase family. Type 1 subfamily.</text>
</comment>
<keyword id="KW-0030">Aminoacyl-tRNA synthetase</keyword>
<keyword id="KW-0067">ATP-binding</keyword>
<keyword id="KW-0963">Cytoplasm</keyword>
<keyword id="KW-0436">Ligase</keyword>
<keyword id="KW-0547">Nucleotide-binding</keyword>
<keyword id="KW-0648">Protein biosynthesis</keyword>
<keyword id="KW-1185">Reference proteome</keyword>
<feature type="chain" id="PRO_0000110850" description="Aspartate--tRNA ligase">
    <location>
        <begin position="1"/>
        <end position="576"/>
    </location>
</feature>
<feature type="region of interest" description="Aspartate" evidence="1">
    <location>
        <begin position="196"/>
        <end position="199"/>
    </location>
</feature>
<feature type="binding site" evidence="1">
    <location>
        <position position="172"/>
    </location>
    <ligand>
        <name>L-aspartate</name>
        <dbReference type="ChEBI" id="CHEBI:29991"/>
    </ligand>
</feature>
<feature type="binding site" evidence="1">
    <location>
        <begin position="218"/>
        <end position="220"/>
    </location>
    <ligand>
        <name>ATP</name>
        <dbReference type="ChEBI" id="CHEBI:30616"/>
    </ligand>
</feature>
<feature type="binding site" evidence="1">
    <location>
        <position position="218"/>
    </location>
    <ligand>
        <name>L-aspartate</name>
        <dbReference type="ChEBI" id="CHEBI:29991"/>
    </ligand>
</feature>
<feature type="binding site" evidence="1">
    <location>
        <position position="227"/>
    </location>
    <ligand>
        <name>ATP</name>
        <dbReference type="ChEBI" id="CHEBI:30616"/>
    </ligand>
</feature>
<feature type="binding site" evidence="1">
    <location>
        <position position="455"/>
    </location>
    <ligand>
        <name>L-aspartate</name>
        <dbReference type="ChEBI" id="CHEBI:29991"/>
    </ligand>
</feature>
<feature type="binding site" evidence="1">
    <location>
        <position position="489"/>
    </location>
    <ligand>
        <name>ATP</name>
        <dbReference type="ChEBI" id="CHEBI:30616"/>
    </ligand>
</feature>
<feature type="binding site" evidence="1">
    <location>
        <position position="496"/>
    </location>
    <ligand>
        <name>L-aspartate</name>
        <dbReference type="ChEBI" id="CHEBI:29991"/>
    </ligand>
</feature>
<feature type="binding site" evidence="1">
    <location>
        <begin position="541"/>
        <end position="544"/>
    </location>
    <ligand>
        <name>ATP</name>
        <dbReference type="ChEBI" id="CHEBI:30616"/>
    </ligand>
</feature>
<sequence>MRTAYCGQLNLSHVGLEVTLCGWVNKYRNFGKLIFVDLRDREGCIQVYFNSDAQKKTYVRAADLKQEFCIQLTGIVRSRPVSQINKNMSTGFIEIEAKFFLVLNVSNPLPLDIHQDNIEENRLKYRYLDLRRPIMFHNIQTRSRVMALTHRFMELEGLLNIDTPVLAKSTPEGARDYLVPSRLHINKYYALPQSPQMFKQLLMIAGIDRYYQITKCFRDEDLRSDRQPEFTQIDVEISFITAKKIRELMEFFICKLWKEILNVELEVFSQFSYAEVISRFGSDSPDLRNPIEMKDVSSIFQSLGNKLFICNAGCVDTIDTQVIVMNVPSGFKLTRNEIDKYSDYAKKSGIQQFLWMKIQMNDCKEITAIDGPIINLLNKNFLQLLMAQVKIENNDILFFGFNNDKNLSTTRMLSALRSKLGYDLNLVKQDSWKPLWIVDFPMFKKNTSGKLVSMHHMFTAPKDNDLICLKRNPELAVSEAYDIVINGCEVGSGSVRIHSYKLQQAMFDILGITRENQQKKFGCLMNALKYGAPPHAGIALGLDRLVMLLTKSNNIRDVIAFPKTTGAMDLMIDAPD</sequence>
<gene>
    <name evidence="1" type="primary">aspS</name>
    <name type="ordered locus">Bfl452</name>
</gene>
<evidence type="ECO:0000255" key="1">
    <source>
        <dbReference type="HAMAP-Rule" id="MF_00044"/>
    </source>
</evidence>
<proteinExistence type="inferred from homology"/>